<keyword id="KW-0175">Coiled coil</keyword>
<keyword id="KW-0256">Endoplasmic reticulum</keyword>
<keyword id="KW-0342">GTP-binding</keyword>
<keyword id="KW-0378">Hydrolase</keyword>
<keyword id="KW-0472">Membrane</keyword>
<keyword id="KW-0547">Nucleotide-binding</keyword>
<keyword id="KW-1185">Reference proteome</keyword>
<keyword id="KW-0812">Transmembrane</keyword>
<keyword id="KW-1133">Transmembrane helix</keyword>
<sequence length="752" mass="88194">MIKNQGDRYHLIDKNALEEKKLDSNELTEFVKSSGLIDIGKKYNIVSIIGSQSTGKSTLLNYLFGTQFDVQNRQQSVGQTTVGIWISKDVKNNVVVLDVEGSDSVERKSGENMVENQTALMALAMSHCFIINVFVNALGQHTSCQLSIIKIIMQQNLKLFQQDTVKHIIFVVRDWDEEYNYDEASRKLNGYLLNIWNEIPKPDQYRETDFHELFSVQVVTLVYYKLKNEFAEQTNQLHSKLANQQDPNFIFKDFDYEKNVRWSDMPQYLSNIWVVIANNKDLNLPNEKILISNMRCQQIKLEALEGVKDLTEDLQNRVRTQFVENFGQQCLSILGVAQKIYDKDAKDYHADVYKEKEKELRDELMNKFYTYFQRQTESLKQHYMNRLSENLETLKRESIYDLPDKLNEVDLLKVNFEESLSKSVIEKGLWQEQDHVGFFNQQFDNQLKSFVEAQLASFKQQLDNIIKSECDKIVSQQVLNISPKFWSQIDADYYTMISDKYSKYDALLSGLRVQWKQIDDYLSKFEEDSFHNLKQVIAVASGRFKDQLFQQFKAQFVRTEDGQPRNWQKTTEEEIFHIYTEARDKVFSFLDILRIRKVKFIRIQQTMKKIAKTHLAPFTPLKEKISYQISADTDSDDVVLNEVFYTQVKMQLAEDIDVQYQDAIQKHKQDFLQNIPKPFWFLLLFFMYDDVLRWMGNPLFLYPILIILCFIGFCIAIGLHSLPKLAFQTVFRTINQALLPLIFGGISKLKTS</sequence>
<protein>
    <recommendedName>
        <fullName evidence="1">Protein SEY1 homolog 1</fullName>
        <ecNumber evidence="1">3.6.5.-</ecNumber>
    </recommendedName>
</protein>
<comment type="function">
    <text evidence="1">Probable GTP-binding protein that may be involved in cell development.</text>
</comment>
<comment type="subcellular location">
    <subcellularLocation>
        <location evidence="1">Endoplasmic reticulum membrane</location>
        <topology evidence="1">Multi-pass membrane protein</topology>
    </subcellularLocation>
</comment>
<comment type="similarity">
    <text evidence="2">Belongs to the TRAFAC class dynamin-like GTPase superfamily. GB1/RHD3 GTPase family. RHD3 subfamily.</text>
</comment>
<dbReference type="EC" id="3.6.5.-" evidence="1"/>
<dbReference type="EMBL" id="CT868000">
    <property type="protein sequence ID" value="CAK59029.1"/>
    <property type="molecule type" value="Genomic_DNA"/>
</dbReference>
<dbReference type="RefSeq" id="XP_001426427.1">
    <property type="nucleotide sequence ID" value="XM_001426390.1"/>
</dbReference>
<dbReference type="SMR" id="A0BKG2"/>
<dbReference type="STRING" id="5888.A0BKG2"/>
<dbReference type="EnsemblProtists" id="CAK59029">
    <property type="protein sequence ID" value="CAK59029"/>
    <property type="gene ID" value="GSPATT00029660001"/>
</dbReference>
<dbReference type="GeneID" id="5012211"/>
<dbReference type="KEGG" id="ptm:GSPATT00029660001"/>
<dbReference type="eggNOG" id="KOG2203">
    <property type="taxonomic scope" value="Eukaryota"/>
</dbReference>
<dbReference type="HOGENOM" id="CLU_378813_0_0_1"/>
<dbReference type="InParanoid" id="A0BKG2"/>
<dbReference type="OMA" id="SYAHEEE"/>
<dbReference type="OrthoDB" id="1597724at2759"/>
<dbReference type="Proteomes" id="UP000000600">
    <property type="component" value="Partially assembled WGS sequence"/>
</dbReference>
<dbReference type="GO" id="GO:0005783">
    <property type="term" value="C:endoplasmic reticulum"/>
    <property type="evidence" value="ECO:0000318"/>
    <property type="project" value="GO_Central"/>
</dbReference>
<dbReference type="GO" id="GO:0005789">
    <property type="term" value="C:endoplasmic reticulum membrane"/>
    <property type="evidence" value="ECO:0007669"/>
    <property type="project" value="UniProtKB-SubCell"/>
</dbReference>
<dbReference type="GO" id="GO:0005525">
    <property type="term" value="F:GTP binding"/>
    <property type="evidence" value="ECO:0007669"/>
    <property type="project" value="UniProtKB-UniRule"/>
</dbReference>
<dbReference type="GO" id="GO:0003924">
    <property type="term" value="F:GTPase activity"/>
    <property type="evidence" value="ECO:0000318"/>
    <property type="project" value="GO_Central"/>
</dbReference>
<dbReference type="GO" id="GO:0016320">
    <property type="term" value="P:endoplasmic reticulum membrane fusion"/>
    <property type="evidence" value="ECO:0000318"/>
    <property type="project" value="GO_Central"/>
</dbReference>
<dbReference type="Gene3D" id="3.40.50.300">
    <property type="entry name" value="P-loop containing nucleotide triphosphate hydrolases"/>
    <property type="match status" value="1"/>
</dbReference>
<dbReference type="HAMAP" id="MF_03109">
    <property type="entry name" value="Sey1"/>
    <property type="match status" value="1"/>
</dbReference>
<dbReference type="InterPro" id="IPR030386">
    <property type="entry name" value="G_GB1_RHD3_dom"/>
</dbReference>
<dbReference type="InterPro" id="IPR027417">
    <property type="entry name" value="P-loop_NTPase"/>
</dbReference>
<dbReference type="InterPro" id="IPR008803">
    <property type="entry name" value="RHD3/Sey1"/>
</dbReference>
<dbReference type="InterPro" id="IPR046758">
    <property type="entry name" value="Sey1/RHD3-like_3HB"/>
</dbReference>
<dbReference type="PANTHER" id="PTHR45923">
    <property type="entry name" value="PROTEIN SEY1"/>
    <property type="match status" value="1"/>
</dbReference>
<dbReference type="PANTHER" id="PTHR45923:SF2">
    <property type="entry name" value="PROTEIN SEY1"/>
    <property type="match status" value="1"/>
</dbReference>
<dbReference type="Pfam" id="PF05879">
    <property type="entry name" value="RHD3_GTPase"/>
    <property type="match status" value="1"/>
</dbReference>
<dbReference type="Pfam" id="PF20428">
    <property type="entry name" value="Sey1_3HB"/>
    <property type="match status" value="1"/>
</dbReference>
<dbReference type="SUPFAM" id="SSF52540">
    <property type="entry name" value="P-loop containing nucleoside triphosphate hydrolases"/>
    <property type="match status" value="1"/>
</dbReference>
<dbReference type="PROSITE" id="PS51715">
    <property type="entry name" value="G_GB1_RHD3"/>
    <property type="match status" value="1"/>
</dbReference>
<reference key="1">
    <citation type="journal article" date="2006" name="Nature">
        <title>Global trends of whole-genome duplications revealed by the ciliate Paramecium tetraurelia.</title>
        <authorList>
            <person name="Aury J.-M."/>
            <person name="Jaillon O."/>
            <person name="Duret L."/>
            <person name="Noel B."/>
            <person name="Jubin C."/>
            <person name="Porcel B.M."/>
            <person name="Segurens B."/>
            <person name="Daubin V."/>
            <person name="Anthouard V."/>
            <person name="Aiach N."/>
            <person name="Arnaiz O."/>
            <person name="Billaut A."/>
            <person name="Beisson J."/>
            <person name="Blanc I."/>
            <person name="Bouhouche K."/>
            <person name="Camara F."/>
            <person name="Duharcourt S."/>
            <person name="Guigo R."/>
            <person name="Gogendeau D."/>
            <person name="Katinka M."/>
            <person name="Keller A.-M."/>
            <person name="Kissmehl R."/>
            <person name="Klotz C."/>
            <person name="Koll F."/>
            <person name="Le Mouel A."/>
            <person name="Lepere G."/>
            <person name="Malinsky S."/>
            <person name="Nowacki M."/>
            <person name="Nowak J.K."/>
            <person name="Plattner H."/>
            <person name="Poulain J."/>
            <person name="Ruiz F."/>
            <person name="Serrano V."/>
            <person name="Zagulski M."/>
            <person name="Dessen P."/>
            <person name="Betermier M."/>
            <person name="Weissenbach J."/>
            <person name="Scarpelli C."/>
            <person name="Schaechter V."/>
            <person name="Sperling L."/>
            <person name="Meyer E."/>
            <person name="Cohen J."/>
            <person name="Wincker P."/>
        </authorList>
    </citation>
    <scope>NUCLEOTIDE SEQUENCE [LARGE SCALE GENOMIC DNA]</scope>
    <source>
        <strain>Stock d4-2</strain>
    </source>
</reference>
<name>SEY11_PARTE</name>
<feature type="chain" id="PRO_0000384952" description="Protein SEY1 homolog 1">
    <location>
        <begin position="1"/>
        <end position="752"/>
    </location>
</feature>
<feature type="topological domain" description="Cytoplasmic" evidence="1">
    <location>
        <begin position="1"/>
        <end position="674"/>
    </location>
</feature>
<feature type="transmembrane region" description="Helical" evidence="1">
    <location>
        <begin position="675"/>
        <end position="695"/>
    </location>
</feature>
<feature type="topological domain" description="Lumenal" evidence="1">
    <location>
        <begin position="696"/>
        <end position="698"/>
    </location>
</feature>
<feature type="transmembrane region" description="Helical" evidence="1">
    <location>
        <begin position="699"/>
        <end position="719"/>
    </location>
</feature>
<feature type="topological domain" description="Cytoplasmic" evidence="1">
    <location>
        <begin position="720"/>
        <end position="752"/>
    </location>
</feature>
<feature type="domain" description="GB1/RHD3-type G" evidence="2">
    <location>
        <begin position="40"/>
        <end position="265"/>
    </location>
</feature>
<feature type="coiled-coil region" evidence="1">
    <location>
        <begin position="445"/>
        <end position="465"/>
    </location>
</feature>
<feature type="binding site" evidence="1">
    <location>
        <begin position="50"/>
        <end position="57"/>
    </location>
    <ligand>
        <name>GTP</name>
        <dbReference type="ChEBI" id="CHEBI:37565"/>
    </ligand>
</feature>
<accession>A0BKG2</accession>
<organism>
    <name type="scientific">Paramecium tetraurelia</name>
    <dbReference type="NCBI Taxonomy" id="5888"/>
    <lineage>
        <taxon>Eukaryota</taxon>
        <taxon>Sar</taxon>
        <taxon>Alveolata</taxon>
        <taxon>Ciliophora</taxon>
        <taxon>Intramacronucleata</taxon>
        <taxon>Oligohymenophorea</taxon>
        <taxon>Peniculida</taxon>
        <taxon>Parameciidae</taxon>
        <taxon>Paramecium</taxon>
    </lineage>
</organism>
<proteinExistence type="inferred from homology"/>
<gene>
    <name type="ORF">GSPATT00029660001</name>
</gene>
<evidence type="ECO:0000255" key="1">
    <source>
        <dbReference type="HAMAP-Rule" id="MF_03109"/>
    </source>
</evidence>
<evidence type="ECO:0000255" key="2">
    <source>
        <dbReference type="PROSITE-ProRule" id="PRU01052"/>
    </source>
</evidence>